<feature type="chain" id="PRO_1000024024" description="Dihydroorotase">
    <location>
        <begin position="1"/>
        <end position="344"/>
    </location>
</feature>
<feature type="active site" evidence="1">
    <location>
        <position position="247"/>
    </location>
</feature>
<feature type="binding site" evidence="1">
    <location>
        <position position="13"/>
    </location>
    <ligand>
        <name>Zn(2+)</name>
        <dbReference type="ChEBI" id="CHEBI:29105"/>
        <label>1</label>
    </ligand>
</feature>
<feature type="binding site" evidence="1">
    <location>
        <begin position="15"/>
        <end position="17"/>
    </location>
    <ligand>
        <name>substrate</name>
    </ligand>
</feature>
<feature type="binding site" evidence="1">
    <location>
        <position position="15"/>
    </location>
    <ligand>
        <name>Zn(2+)</name>
        <dbReference type="ChEBI" id="CHEBI:29105"/>
        <label>1</label>
    </ligand>
</feature>
<feature type="binding site" evidence="1">
    <location>
        <position position="41"/>
    </location>
    <ligand>
        <name>substrate</name>
    </ligand>
</feature>
<feature type="binding site" description="via carbamate group" evidence="1">
    <location>
        <position position="98"/>
    </location>
    <ligand>
        <name>Zn(2+)</name>
        <dbReference type="ChEBI" id="CHEBI:29105"/>
        <label>1</label>
    </ligand>
</feature>
<feature type="binding site" description="via carbamate group" evidence="1">
    <location>
        <position position="98"/>
    </location>
    <ligand>
        <name>Zn(2+)</name>
        <dbReference type="ChEBI" id="CHEBI:29105"/>
        <label>2</label>
    </ligand>
</feature>
<feature type="binding site" evidence="1">
    <location>
        <position position="135"/>
    </location>
    <ligand>
        <name>substrate</name>
    </ligand>
</feature>
<feature type="binding site" evidence="1">
    <location>
        <position position="135"/>
    </location>
    <ligand>
        <name>Zn(2+)</name>
        <dbReference type="ChEBI" id="CHEBI:29105"/>
        <label>2</label>
    </ligand>
</feature>
<feature type="binding site" evidence="1">
    <location>
        <position position="173"/>
    </location>
    <ligand>
        <name>Zn(2+)</name>
        <dbReference type="ChEBI" id="CHEBI:29105"/>
        <label>2</label>
    </ligand>
</feature>
<feature type="binding site" evidence="1">
    <location>
        <position position="218"/>
    </location>
    <ligand>
        <name>substrate</name>
    </ligand>
</feature>
<feature type="binding site" evidence="1">
    <location>
        <position position="247"/>
    </location>
    <ligand>
        <name>Zn(2+)</name>
        <dbReference type="ChEBI" id="CHEBI:29105"/>
        <label>1</label>
    </ligand>
</feature>
<feature type="binding site" evidence="1">
    <location>
        <position position="251"/>
    </location>
    <ligand>
        <name>substrate</name>
    </ligand>
</feature>
<feature type="binding site" evidence="1">
    <location>
        <position position="263"/>
    </location>
    <ligand>
        <name>substrate</name>
    </ligand>
</feature>
<feature type="modified residue" description="N6-carboxylysine" evidence="1">
    <location>
        <position position="98"/>
    </location>
</feature>
<sequence length="344" mass="37258">MQTLTIIRPDDMHLHLRDGDALKAVVPYTARQMGRAVIMPNLKPPVVSVADALAYKARIMAALPEGSAFEPLMTLYLTDQATPELVREAKAAGIVAFKLYPAGATTNSDSGVTDLFKLIPVLEEMAKQDILFLVHGEVTDPEIDIFDREAAFIERVMKPVLAQVPNLKVVFEHITTAEAARLVLEAGDNVAASVTPQHLLLNRNDLLVGGVRPHHFCLPVLKRETHRQALVAAVTGEKAHKFFLGTDSAPHAKSAKENACGCAGMFSAMTAVELYAEVFEKAGALDKLEAFASKNGARFYGIPENTDTITLVKQSQTVPASVPYGDGELVPMRAGGEIGWMVQY</sequence>
<organism>
    <name type="scientific">Neisseria meningitidis serogroup C / serotype 2a (strain ATCC 700532 / DSM 15464 / FAM18)</name>
    <dbReference type="NCBI Taxonomy" id="272831"/>
    <lineage>
        <taxon>Bacteria</taxon>
        <taxon>Pseudomonadati</taxon>
        <taxon>Pseudomonadota</taxon>
        <taxon>Betaproteobacteria</taxon>
        <taxon>Neisseriales</taxon>
        <taxon>Neisseriaceae</taxon>
        <taxon>Neisseria</taxon>
    </lineage>
</organism>
<protein>
    <recommendedName>
        <fullName evidence="1">Dihydroorotase</fullName>
        <shortName evidence="1">DHOase</shortName>
        <ecNumber evidence="1">3.5.2.3</ecNumber>
    </recommendedName>
</protein>
<name>PYRC_NEIMF</name>
<keyword id="KW-0378">Hydrolase</keyword>
<keyword id="KW-0479">Metal-binding</keyword>
<keyword id="KW-0665">Pyrimidine biosynthesis</keyword>
<keyword id="KW-0862">Zinc</keyword>
<reference key="1">
    <citation type="journal article" date="2007" name="PLoS Genet.">
        <title>Meningococcal genetic variation mechanisms viewed through comparative analysis of serogroup C strain FAM18.</title>
        <authorList>
            <person name="Bentley S.D."/>
            <person name="Vernikos G.S."/>
            <person name="Snyder L.A.S."/>
            <person name="Churcher C."/>
            <person name="Arrowsmith C."/>
            <person name="Chillingworth T."/>
            <person name="Cronin A."/>
            <person name="Davis P.H."/>
            <person name="Holroyd N.E."/>
            <person name="Jagels K."/>
            <person name="Maddison M."/>
            <person name="Moule S."/>
            <person name="Rabbinowitsch E."/>
            <person name="Sharp S."/>
            <person name="Unwin L."/>
            <person name="Whitehead S."/>
            <person name="Quail M.A."/>
            <person name="Achtman M."/>
            <person name="Barrell B.G."/>
            <person name="Saunders N.J."/>
            <person name="Parkhill J."/>
        </authorList>
    </citation>
    <scope>NUCLEOTIDE SEQUENCE [LARGE SCALE GENOMIC DNA]</scope>
    <source>
        <strain>ATCC 700532 / DSM 15464 / FAM18</strain>
    </source>
</reference>
<evidence type="ECO:0000255" key="1">
    <source>
        <dbReference type="HAMAP-Rule" id="MF_00219"/>
    </source>
</evidence>
<accession>A1KSU5</accession>
<comment type="function">
    <text evidence="1">Catalyzes the reversible cyclization of carbamoyl aspartate to dihydroorotate.</text>
</comment>
<comment type="catalytic activity">
    <reaction evidence="1">
        <text>(S)-dihydroorotate + H2O = N-carbamoyl-L-aspartate + H(+)</text>
        <dbReference type="Rhea" id="RHEA:24296"/>
        <dbReference type="ChEBI" id="CHEBI:15377"/>
        <dbReference type="ChEBI" id="CHEBI:15378"/>
        <dbReference type="ChEBI" id="CHEBI:30864"/>
        <dbReference type="ChEBI" id="CHEBI:32814"/>
        <dbReference type="EC" id="3.5.2.3"/>
    </reaction>
</comment>
<comment type="cofactor">
    <cofactor evidence="1">
        <name>Zn(2+)</name>
        <dbReference type="ChEBI" id="CHEBI:29105"/>
    </cofactor>
    <text evidence="1">Binds 2 Zn(2+) ions per subunit.</text>
</comment>
<comment type="pathway">
    <text evidence="1">Pyrimidine metabolism; UMP biosynthesis via de novo pathway; (S)-dihydroorotate from bicarbonate: step 3/3.</text>
</comment>
<comment type="subunit">
    <text evidence="1">Homodimer.</text>
</comment>
<comment type="similarity">
    <text evidence="1">Belongs to the metallo-dependent hydrolases superfamily. DHOase family. Class II DHOase subfamily.</text>
</comment>
<dbReference type="EC" id="3.5.2.3" evidence="1"/>
<dbReference type="EMBL" id="AM421808">
    <property type="protein sequence ID" value="CAM09926.1"/>
    <property type="molecule type" value="Genomic_DNA"/>
</dbReference>
<dbReference type="RefSeq" id="WP_002248001.1">
    <property type="nucleotide sequence ID" value="NC_008767.1"/>
</dbReference>
<dbReference type="SMR" id="A1KSU5"/>
<dbReference type="MEROPS" id="M38.A02"/>
<dbReference type="KEGG" id="nmc:NMC0633"/>
<dbReference type="HOGENOM" id="CLU_041558_1_0_4"/>
<dbReference type="UniPathway" id="UPA00070">
    <property type="reaction ID" value="UER00117"/>
</dbReference>
<dbReference type="Proteomes" id="UP000002286">
    <property type="component" value="Chromosome"/>
</dbReference>
<dbReference type="GO" id="GO:0005737">
    <property type="term" value="C:cytoplasm"/>
    <property type="evidence" value="ECO:0007669"/>
    <property type="project" value="TreeGrafter"/>
</dbReference>
<dbReference type="GO" id="GO:0004151">
    <property type="term" value="F:dihydroorotase activity"/>
    <property type="evidence" value="ECO:0007669"/>
    <property type="project" value="UniProtKB-UniRule"/>
</dbReference>
<dbReference type="GO" id="GO:0008270">
    <property type="term" value="F:zinc ion binding"/>
    <property type="evidence" value="ECO:0007669"/>
    <property type="project" value="UniProtKB-UniRule"/>
</dbReference>
<dbReference type="GO" id="GO:0006207">
    <property type="term" value="P:'de novo' pyrimidine nucleobase biosynthetic process"/>
    <property type="evidence" value="ECO:0007669"/>
    <property type="project" value="TreeGrafter"/>
</dbReference>
<dbReference type="GO" id="GO:0044205">
    <property type="term" value="P:'de novo' UMP biosynthetic process"/>
    <property type="evidence" value="ECO:0007669"/>
    <property type="project" value="UniProtKB-UniRule"/>
</dbReference>
<dbReference type="CDD" id="cd01294">
    <property type="entry name" value="DHOase"/>
    <property type="match status" value="1"/>
</dbReference>
<dbReference type="FunFam" id="3.20.20.140:FF:000006">
    <property type="entry name" value="Dihydroorotase"/>
    <property type="match status" value="1"/>
</dbReference>
<dbReference type="Gene3D" id="3.20.20.140">
    <property type="entry name" value="Metal-dependent hydrolases"/>
    <property type="match status" value="1"/>
</dbReference>
<dbReference type="HAMAP" id="MF_00219">
    <property type="entry name" value="PyrC_classII"/>
    <property type="match status" value="1"/>
</dbReference>
<dbReference type="InterPro" id="IPR006680">
    <property type="entry name" value="Amidohydro-rel"/>
</dbReference>
<dbReference type="InterPro" id="IPR004721">
    <property type="entry name" value="DHOdimr"/>
</dbReference>
<dbReference type="InterPro" id="IPR002195">
    <property type="entry name" value="Dihydroorotase_CS"/>
</dbReference>
<dbReference type="InterPro" id="IPR032466">
    <property type="entry name" value="Metal_Hydrolase"/>
</dbReference>
<dbReference type="NCBIfam" id="TIGR00856">
    <property type="entry name" value="pyrC_dimer"/>
    <property type="match status" value="1"/>
</dbReference>
<dbReference type="PANTHER" id="PTHR43137">
    <property type="entry name" value="DIHYDROOROTASE"/>
    <property type="match status" value="1"/>
</dbReference>
<dbReference type="PANTHER" id="PTHR43137:SF1">
    <property type="entry name" value="DIHYDROOROTASE"/>
    <property type="match status" value="1"/>
</dbReference>
<dbReference type="Pfam" id="PF01979">
    <property type="entry name" value="Amidohydro_1"/>
    <property type="match status" value="1"/>
</dbReference>
<dbReference type="PIRSF" id="PIRSF001237">
    <property type="entry name" value="DHOdimr"/>
    <property type="match status" value="1"/>
</dbReference>
<dbReference type="SUPFAM" id="SSF51556">
    <property type="entry name" value="Metallo-dependent hydrolases"/>
    <property type="match status" value="1"/>
</dbReference>
<dbReference type="PROSITE" id="PS00482">
    <property type="entry name" value="DIHYDROOROTASE_1"/>
    <property type="match status" value="1"/>
</dbReference>
<dbReference type="PROSITE" id="PS00483">
    <property type="entry name" value="DIHYDROOROTASE_2"/>
    <property type="match status" value="1"/>
</dbReference>
<gene>
    <name evidence="1" type="primary">pyrC</name>
    <name type="ordered locus">NMC0633</name>
</gene>
<proteinExistence type="inferred from homology"/>